<proteinExistence type="inferred from homology"/>
<gene>
    <name evidence="1" type="primary">ssuD</name>
    <name type="ordered locus">RHECIAT_PA0000133</name>
</gene>
<geneLocation type="plasmid">
    <name>pA</name>
</geneLocation>
<reference key="1">
    <citation type="journal article" date="2010" name="Appl. Environ. Microbiol.">
        <title>Conserved symbiotic plasmid DNA sequences in the multireplicon pangenomic structure of Rhizobium etli.</title>
        <authorList>
            <person name="Gonzalez V."/>
            <person name="Acosta J.L."/>
            <person name="Santamaria R.I."/>
            <person name="Bustos P."/>
            <person name="Fernandez J.L."/>
            <person name="Hernandez Gonzalez I.L."/>
            <person name="Diaz R."/>
            <person name="Flores M."/>
            <person name="Palacios R."/>
            <person name="Mora J."/>
            <person name="Davila G."/>
        </authorList>
    </citation>
    <scope>NUCLEOTIDE SEQUENCE [LARGE SCALE GENOMIC DNA]</scope>
    <source>
        <strain>CIAT 652</strain>
    </source>
</reference>
<accession>B3Q1C3</accession>
<keyword id="KW-0285">Flavoprotein</keyword>
<keyword id="KW-0288">FMN</keyword>
<keyword id="KW-0503">Monooxygenase</keyword>
<keyword id="KW-0560">Oxidoreductase</keyword>
<keyword id="KW-0614">Plasmid</keyword>
<dbReference type="EC" id="1.14.14.5" evidence="1"/>
<dbReference type="EMBL" id="CP001075">
    <property type="protein sequence ID" value="ACE93479.1"/>
    <property type="molecule type" value="Genomic_DNA"/>
</dbReference>
<dbReference type="SMR" id="B3Q1C3"/>
<dbReference type="KEGG" id="rec:RHECIAT_PA0000133"/>
<dbReference type="HOGENOM" id="CLU_027853_1_0_5"/>
<dbReference type="Proteomes" id="UP000008817">
    <property type="component" value="Plasmid pA"/>
</dbReference>
<dbReference type="GO" id="GO:0008726">
    <property type="term" value="F:alkanesulfonate monooxygenase activity"/>
    <property type="evidence" value="ECO:0007669"/>
    <property type="project" value="UniProtKB-UniRule"/>
</dbReference>
<dbReference type="GO" id="GO:0046306">
    <property type="term" value="P:alkanesulfonate catabolic process"/>
    <property type="evidence" value="ECO:0007669"/>
    <property type="project" value="TreeGrafter"/>
</dbReference>
<dbReference type="CDD" id="cd01094">
    <property type="entry name" value="Alkanesulfonate_monoxygenase"/>
    <property type="match status" value="1"/>
</dbReference>
<dbReference type="Gene3D" id="3.20.20.30">
    <property type="entry name" value="Luciferase-like domain"/>
    <property type="match status" value="1"/>
</dbReference>
<dbReference type="HAMAP" id="MF_01229">
    <property type="entry name" value="Alkanesulf_monooxygen"/>
    <property type="match status" value="1"/>
</dbReference>
<dbReference type="InterPro" id="IPR019911">
    <property type="entry name" value="Alkanesulphonate_mOase_FMN-dep"/>
</dbReference>
<dbReference type="InterPro" id="IPR011251">
    <property type="entry name" value="Luciferase-like_dom"/>
</dbReference>
<dbReference type="InterPro" id="IPR036661">
    <property type="entry name" value="Luciferase-like_sf"/>
</dbReference>
<dbReference type="InterPro" id="IPR050172">
    <property type="entry name" value="SsuD_RutA_monooxygenase"/>
</dbReference>
<dbReference type="NCBIfam" id="TIGR03565">
    <property type="entry name" value="alk_sulf_monoox"/>
    <property type="match status" value="1"/>
</dbReference>
<dbReference type="NCBIfam" id="NF001939">
    <property type="entry name" value="PRK00719.1"/>
    <property type="match status" value="1"/>
</dbReference>
<dbReference type="PANTHER" id="PTHR42847">
    <property type="entry name" value="ALKANESULFONATE MONOOXYGENASE"/>
    <property type="match status" value="1"/>
</dbReference>
<dbReference type="PANTHER" id="PTHR42847:SF4">
    <property type="entry name" value="ALKANESULFONATE MONOOXYGENASE-RELATED"/>
    <property type="match status" value="1"/>
</dbReference>
<dbReference type="Pfam" id="PF00296">
    <property type="entry name" value="Bac_luciferase"/>
    <property type="match status" value="1"/>
</dbReference>
<dbReference type="SUPFAM" id="SSF51679">
    <property type="entry name" value="Bacterial luciferase-like"/>
    <property type="match status" value="1"/>
</dbReference>
<feature type="chain" id="PRO_0000403216" description="Alkanesulfonate monooxygenase">
    <location>
        <begin position="1"/>
        <end position="389"/>
    </location>
</feature>
<evidence type="ECO:0000255" key="1">
    <source>
        <dbReference type="HAMAP-Rule" id="MF_01229"/>
    </source>
</evidence>
<organism>
    <name type="scientific">Rhizobium etli (strain CIAT 652)</name>
    <dbReference type="NCBI Taxonomy" id="491916"/>
    <lineage>
        <taxon>Bacteria</taxon>
        <taxon>Pseudomonadati</taxon>
        <taxon>Pseudomonadota</taxon>
        <taxon>Alphaproteobacteria</taxon>
        <taxon>Hyphomicrobiales</taxon>
        <taxon>Rhizobiaceae</taxon>
        <taxon>Rhizobium/Agrobacterium group</taxon>
        <taxon>Rhizobium</taxon>
    </lineage>
</organism>
<name>SSUD_RHIE6</name>
<comment type="function">
    <text evidence="1">Catalyzes the desulfonation of aliphatic sulfonates.</text>
</comment>
<comment type="catalytic activity">
    <reaction evidence="1">
        <text>an alkanesulfonate + FMNH2 + O2 = an aldehyde + FMN + sulfite + H2O + 2 H(+)</text>
        <dbReference type="Rhea" id="RHEA:23064"/>
        <dbReference type="ChEBI" id="CHEBI:15377"/>
        <dbReference type="ChEBI" id="CHEBI:15378"/>
        <dbReference type="ChEBI" id="CHEBI:15379"/>
        <dbReference type="ChEBI" id="CHEBI:17359"/>
        <dbReference type="ChEBI" id="CHEBI:17478"/>
        <dbReference type="ChEBI" id="CHEBI:57618"/>
        <dbReference type="ChEBI" id="CHEBI:58210"/>
        <dbReference type="ChEBI" id="CHEBI:134249"/>
        <dbReference type="EC" id="1.14.14.5"/>
    </reaction>
</comment>
<comment type="similarity">
    <text evidence="1">Belongs to the SsuD family.</text>
</comment>
<protein>
    <recommendedName>
        <fullName evidence="1">Alkanesulfonate monooxygenase</fullName>
        <ecNumber evidence="1">1.14.14.5</ecNumber>
    </recommendedName>
    <alternativeName>
        <fullName evidence="1">FMNH2-dependent aliphatic sulfonate monooxygenase</fullName>
    </alternativeName>
</protein>
<sequence length="389" mass="41586">MMAIDKPLDFLWFIPSSGDGQYLGSDDLSRPADPGYFREIAKAADRLGYSGVLIPTGAACEESFILAADLAAHTERLKFLVAIRPGTASPAYYARLAATLDRVSNGRLLINIVVGGSAQELAGDGIFLPHDERYDHAGEFFQVFNSLVETGKANLDGKYIKAIDARLGLPPVQEPRPPLYFGGSSDAAIAFSGGITDKYLTWGEPPAQVAEKIAKVRKAAAAQGKHVTFGIRLHFIVRETDEEAWAAADRLISKLSDETIAAAQEVFAKSSDSVGQARMVALHQGRRDKLEVSPNLWAGIGLVRTGAGTALVGSPKTIAERLREYQALGIDTVIASGYPHLEEAYRVSELLFPEIGLPGPHGQIRSSFGERRVFGGGGHGGNVKIASAS</sequence>